<reference key="1">
    <citation type="journal article" date="2006" name="Appl. Environ. Microbiol.">
        <title>Genome sequence of the chemolithoautotrophic nitrite-oxidizing bacterium Nitrobacter winogradskyi Nb-255.</title>
        <authorList>
            <person name="Starkenburg S.R."/>
            <person name="Chain P.S.G."/>
            <person name="Sayavedra-Soto L.A."/>
            <person name="Hauser L."/>
            <person name="Land M.L."/>
            <person name="Larimer F.W."/>
            <person name="Malfatti S.A."/>
            <person name="Klotz M.G."/>
            <person name="Bottomley P.J."/>
            <person name="Arp D.J."/>
            <person name="Hickey W.J."/>
        </authorList>
    </citation>
    <scope>NUCLEOTIDE SEQUENCE [LARGE SCALE GENOMIC DNA]</scope>
    <source>
        <strain>ATCC 25391 / DSM 10237 / CIP 104748 / NCIMB 11846 / Nb-255</strain>
    </source>
</reference>
<dbReference type="EMBL" id="CP000115">
    <property type="protein sequence ID" value="ABA04608.1"/>
    <property type="molecule type" value="Genomic_DNA"/>
</dbReference>
<dbReference type="RefSeq" id="WP_011314626.1">
    <property type="nucleotide sequence ID" value="NC_007406.1"/>
</dbReference>
<dbReference type="SMR" id="Q3SSY3"/>
<dbReference type="STRING" id="323098.Nwi_1347"/>
<dbReference type="KEGG" id="nwi:Nwi_1347"/>
<dbReference type="eggNOG" id="COG0081">
    <property type="taxonomic scope" value="Bacteria"/>
</dbReference>
<dbReference type="HOGENOM" id="CLU_062853_0_0_5"/>
<dbReference type="OrthoDB" id="9803740at2"/>
<dbReference type="Proteomes" id="UP000002531">
    <property type="component" value="Chromosome"/>
</dbReference>
<dbReference type="GO" id="GO:0022625">
    <property type="term" value="C:cytosolic large ribosomal subunit"/>
    <property type="evidence" value="ECO:0007669"/>
    <property type="project" value="TreeGrafter"/>
</dbReference>
<dbReference type="GO" id="GO:0019843">
    <property type="term" value="F:rRNA binding"/>
    <property type="evidence" value="ECO:0007669"/>
    <property type="project" value="UniProtKB-UniRule"/>
</dbReference>
<dbReference type="GO" id="GO:0003735">
    <property type="term" value="F:structural constituent of ribosome"/>
    <property type="evidence" value="ECO:0007669"/>
    <property type="project" value="InterPro"/>
</dbReference>
<dbReference type="GO" id="GO:0000049">
    <property type="term" value="F:tRNA binding"/>
    <property type="evidence" value="ECO:0007669"/>
    <property type="project" value="UniProtKB-KW"/>
</dbReference>
<dbReference type="GO" id="GO:0006417">
    <property type="term" value="P:regulation of translation"/>
    <property type="evidence" value="ECO:0007669"/>
    <property type="project" value="UniProtKB-KW"/>
</dbReference>
<dbReference type="GO" id="GO:0006412">
    <property type="term" value="P:translation"/>
    <property type="evidence" value="ECO:0007669"/>
    <property type="project" value="UniProtKB-UniRule"/>
</dbReference>
<dbReference type="CDD" id="cd00403">
    <property type="entry name" value="Ribosomal_L1"/>
    <property type="match status" value="1"/>
</dbReference>
<dbReference type="FunFam" id="3.40.50.790:FF:000001">
    <property type="entry name" value="50S ribosomal protein L1"/>
    <property type="match status" value="1"/>
</dbReference>
<dbReference type="Gene3D" id="3.30.190.20">
    <property type="match status" value="1"/>
</dbReference>
<dbReference type="Gene3D" id="3.40.50.790">
    <property type="match status" value="1"/>
</dbReference>
<dbReference type="HAMAP" id="MF_01318_B">
    <property type="entry name" value="Ribosomal_uL1_B"/>
    <property type="match status" value="1"/>
</dbReference>
<dbReference type="InterPro" id="IPR005878">
    <property type="entry name" value="Ribosom_uL1_bac-type"/>
</dbReference>
<dbReference type="InterPro" id="IPR002143">
    <property type="entry name" value="Ribosomal_uL1"/>
</dbReference>
<dbReference type="InterPro" id="IPR023674">
    <property type="entry name" value="Ribosomal_uL1-like"/>
</dbReference>
<dbReference type="InterPro" id="IPR028364">
    <property type="entry name" value="Ribosomal_uL1/biogenesis"/>
</dbReference>
<dbReference type="InterPro" id="IPR016095">
    <property type="entry name" value="Ribosomal_uL1_3-a/b-sand"/>
</dbReference>
<dbReference type="InterPro" id="IPR023673">
    <property type="entry name" value="Ribosomal_uL1_CS"/>
</dbReference>
<dbReference type="NCBIfam" id="TIGR01169">
    <property type="entry name" value="rplA_bact"/>
    <property type="match status" value="1"/>
</dbReference>
<dbReference type="PANTHER" id="PTHR36427">
    <property type="entry name" value="54S RIBOSOMAL PROTEIN L1, MITOCHONDRIAL"/>
    <property type="match status" value="1"/>
</dbReference>
<dbReference type="PANTHER" id="PTHR36427:SF3">
    <property type="entry name" value="LARGE RIBOSOMAL SUBUNIT PROTEIN UL1M"/>
    <property type="match status" value="1"/>
</dbReference>
<dbReference type="Pfam" id="PF00687">
    <property type="entry name" value="Ribosomal_L1"/>
    <property type="match status" value="1"/>
</dbReference>
<dbReference type="PIRSF" id="PIRSF002155">
    <property type="entry name" value="Ribosomal_L1"/>
    <property type="match status" value="1"/>
</dbReference>
<dbReference type="SUPFAM" id="SSF56808">
    <property type="entry name" value="Ribosomal protein L1"/>
    <property type="match status" value="1"/>
</dbReference>
<dbReference type="PROSITE" id="PS01199">
    <property type="entry name" value="RIBOSOMAL_L1"/>
    <property type="match status" value="1"/>
</dbReference>
<evidence type="ECO:0000255" key="1">
    <source>
        <dbReference type="HAMAP-Rule" id="MF_01318"/>
    </source>
</evidence>
<evidence type="ECO:0000305" key="2"/>
<keyword id="KW-1185">Reference proteome</keyword>
<keyword id="KW-0678">Repressor</keyword>
<keyword id="KW-0687">Ribonucleoprotein</keyword>
<keyword id="KW-0689">Ribosomal protein</keyword>
<keyword id="KW-0694">RNA-binding</keyword>
<keyword id="KW-0699">rRNA-binding</keyword>
<keyword id="KW-0810">Translation regulation</keyword>
<keyword id="KW-0820">tRNA-binding</keyword>
<gene>
    <name evidence="1" type="primary">rplA</name>
    <name type="ordered locus">Nwi_1347</name>
</gene>
<sequence>MATGKRLKKSREGIDRNKLYPIADAIRMVKERATSKFDETIEIAMNLGVDPRHADQMVRGVVTLPNGTGRTLRVGVFARGAKAEEAKAAGADVVGAEDLVETVQGGTIAFDRCIATPDMMPLVGRLGKVLGPRGMMPNPKIGTVTMDVAGAVKGAKGGSVEFRVEKAGIVQAGIGKASFSAEKLVENVKALADAVAKAKPAGAKGTYVQRIAVSSTMGPGVKVEPGTVLG</sequence>
<proteinExistence type="inferred from homology"/>
<organism>
    <name type="scientific">Nitrobacter winogradskyi (strain ATCC 25391 / DSM 10237 / CIP 104748 / NCIMB 11846 / Nb-255)</name>
    <dbReference type="NCBI Taxonomy" id="323098"/>
    <lineage>
        <taxon>Bacteria</taxon>
        <taxon>Pseudomonadati</taxon>
        <taxon>Pseudomonadota</taxon>
        <taxon>Alphaproteobacteria</taxon>
        <taxon>Hyphomicrobiales</taxon>
        <taxon>Nitrobacteraceae</taxon>
        <taxon>Nitrobacter</taxon>
    </lineage>
</organism>
<name>RL1_NITWN</name>
<accession>Q3SSY3</accession>
<feature type="chain" id="PRO_0000230618" description="Large ribosomal subunit protein uL1">
    <location>
        <begin position="1"/>
        <end position="230"/>
    </location>
</feature>
<protein>
    <recommendedName>
        <fullName evidence="1">Large ribosomal subunit protein uL1</fullName>
    </recommendedName>
    <alternativeName>
        <fullName evidence="2">50S ribosomal protein L1</fullName>
    </alternativeName>
</protein>
<comment type="function">
    <text evidence="1">Binds directly to 23S rRNA. The L1 stalk is quite mobile in the ribosome, and is involved in E site tRNA release.</text>
</comment>
<comment type="function">
    <text evidence="1">Protein L1 is also a translational repressor protein, it controls the translation of the L11 operon by binding to its mRNA.</text>
</comment>
<comment type="subunit">
    <text evidence="1">Part of the 50S ribosomal subunit.</text>
</comment>
<comment type="similarity">
    <text evidence="1">Belongs to the universal ribosomal protein uL1 family.</text>
</comment>